<keyword id="KW-0472">Membrane</keyword>
<keyword id="KW-0812">Transmembrane</keyword>
<keyword id="KW-1133">Transmembrane helix</keyword>
<comment type="subcellular location">
    <subcellularLocation>
        <location evidence="2">Membrane</location>
        <topology evidence="2">Single-pass membrane protein</topology>
    </subcellularLocation>
</comment>
<comment type="miscellaneous">
    <text evidence="2">Partially overlaps SSN2.</text>
</comment>
<comment type="caution">
    <text evidence="3">Product of a dubious gene prediction unlikely to encode a functional protein. Because of that it is not part of the S.cerevisiae S288c complete/reference proteome set.</text>
</comment>
<sequence length="130" mass="14457">MSRKTLPEKVYLSERIIDEEVAVCTVAAEVLAIFTLVCTRVFIIFFTARICHGIWPSSPSERPYHTFRAARLRNSSKMVSSNCVLSECGQFKRLTANLSQTVSPSHFLNLIKAPLLIAQRCCECASGNGC</sequence>
<proteinExistence type="uncertain"/>
<organism>
    <name type="scientific">Saccharomyces cerevisiae (strain ATCC 204508 / S288c)</name>
    <name type="common">Baker's yeast</name>
    <dbReference type="NCBI Taxonomy" id="559292"/>
    <lineage>
        <taxon>Eukaryota</taxon>
        <taxon>Fungi</taxon>
        <taxon>Dikarya</taxon>
        <taxon>Ascomycota</taxon>
        <taxon>Saccharomycotina</taxon>
        <taxon>Saccharomycetes</taxon>
        <taxon>Saccharomycetales</taxon>
        <taxon>Saccharomycetaceae</taxon>
        <taxon>Saccharomyces</taxon>
    </lineage>
</organism>
<feature type="chain" id="PRO_0000299894" description="Putative uncharacterized protein YDR442W">
    <location>
        <begin position="1"/>
        <end position="130"/>
    </location>
</feature>
<feature type="transmembrane region" description="Helical" evidence="1">
    <location>
        <begin position="21"/>
        <end position="43"/>
    </location>
</feature>
<accession>P87270</accession>
<reference key="1">
    <citation type="journal article" date="1997" name="Nature">
        <title>The nucleotide sequence of Saccharomyces cerevisiae chromosome IV.</title>
        <authorList>
            <person name="Jacq C."/>
            <person name="Alt-Moerbe J."/>
            <person name="Andre B."/>
            <person name="Arnold W."/>
            <person name="Bahr A."/>
            <person name="Ballesta J.P.G."/>
            <person name="Bargues M."/>
            <person name="Baron L."/>
            <person name="Becker A."/>
            <person name="Biteau N."/>
            <person name="Bloecker H."/>
            <person name="Blugeon C."/>
            <person name="Boskovic J."/>
            <person name="Brandt P."/>
            <person name="Brueckner M."/>
            <person name="Buitrago M.J."/>
            <person name="Coster F."/>
            <person name="Delaveau T."/>
            <person name="del Rey F."/>
            <person name="Dujon B."/>
            <person name="Eide L.G."/>
            <person name="Garcia-Cantalejo J.M."/>
            <person name="Goffeau A."/>
            <person name="Gomez-Peris A."/>
            <person name="Granotier C."/>
            <person name="Hanemann V."/>
            <person name="Hankeln T."/>
            <person name="Hoheisel J.D."/>
            <person name="Jaeger W."/>
            <person name="Jimenez A."/>
            <person name="Jonniaux J.-L."/>
            <person name="Kraemer C."/>
            <person name="Kuester H."/>
            <person name="Laamanen P."/>
            <person name="Legros Y."/>
            <person name="Louis E.J."/>
            <person name="Moeller-Rieker S."/>
            <person name="Monnet A."/>
            <person name="Moro M."/>
            <person name="Mueller-Auer S."/>
            <person name="Nussbaumer B."/>
            <person name="Paricio N."/>
            <person name="Paulin L."/>
            <person name="Perea J."/>
            <person name="Perez-Alonso M."/>
            <person name="Perez-Ortin J.E."/>
            <person name="Pohl T.M."/>
            <person name="Prydz H."/>
            <person name="Purnelle B."/>
            <person name="Rasmussen S.W."/>
            <person name="Remacha M.A."/>
            <person name="Revuelta J.L."/>
            <person name="Rieger M."/>
            <person name="Salom D."/>
            <person name="Saluz H.P."/>
            <person name="Saiz J.E."/>
            <person name="Saren A.-M."/>
            <person name="Schaefer M."/>
            <person name="Scharfe M."/>
            <person name="Schmidt E.R."/>
            <person name="Schneider C."/>
            <person name="Scholler P."/>
            <person name="Schwarz S."/>
            <person name="Soler-Mira A."/>
            <person name="Urrestarazu L.A."/>
            <person name="Verhasselt P."/>
            <person name="Vissers S."/>
            <person name="Voet M."/>
            <person name="Volckaert G."/>
            <person name="Wagner G."/>
            <person name="Wambutt R."/>
            <person name="Wedler E."/>
            <person name="Wedler H."/>
            <person name="Woelfl S."/>
            <person name="Harris D.E."/>
            <person name="Bowman S."/>
            <person name="Brown D."/>
            <person name="Churcher C.M."/>
            <person name="Connor R."/>
            <person name="Dedman K."/>
            <person name="Gentles S."/>
            <person name="Hamlin N."/>
            <person name="Hunt S."/>
            <person name="Jones L."/>
            <person name="McDonald S."/>
            <person name="Murphy L.D."/>
            <person name="Niblett D."/>
            <person name="Odell C."/>
            <person name="Oliver K."/>
            <person name="Rajandream M.A."/>
            <person name="Richards C."/>
            <person name="Shore L."/>
            <person name="Walsh S.V."/>
            <person name="Barrell B.G."/>
            <person name="Dietrich F.S."/>
            <person name="Mulligan J.T."/>
            <person name="Allen E."/>
            <person name="Araujo R."/>
            <person name="Aviles E."/>
            <person name="Berno A."/>
            <person name="Carpenter J."/>
            <person name="Chen E."/>
            <person name="Cherry J.M."/>
            <person name="Chung E."/>
            <person name="Duncan M."/>
            <person name="Hunicke-Smith S."/>
            <person name="Hyman R.W."/>
            <person name="Komp C."/>
            <person name="Lashkari D."/>
            <person name="Lew H."/>
            <person name="Lin D."/>
            <person name="Mosedale D."/>
            <person name="Nakahara K."/>
            <person name="Namath A."/>
            <person name="Oefner P."/>
            <person name="Oh C."/>
            <person name="Petel F.X."/>
            <person name="Roberts D."/>
            <person name="Schramm S."/>
            <person name="Schroeder M."/>
            <person name="Shogren T."/>
            <person name="Shroff N."/>
            <person name="Winant A."/>
            <person name="Yelton M.A."/>
            <person name="Botstein D."/>
            <person name="Davis R.W."/>
            <person name="Johnston M."/>
            <person name="Andrews S."/>
            <person name="Brinkman R."/>
            <person name="Cooper J."/>
            <person name="Ding H."/>
            <person name="Du Z."/>
            <person name="Favello A."/>
            <person name="Fulton L."/>
            <person name="Gattung S."/>
            <person name="Greco T."/>
            <person name="Hallsworth K."/>
            <person name="Hawkins J."/>
            <person name="Hillier L.W."/>
            <person name="Jier M."/>
            <person name="Johnson D."/>
            <person name="Johnston L."/>
            <person name="Kirsten J."/>
            <person name="Kucaba T."/>
            <person name="Langston Y."/>
            <person name="Latreille P."/>
            <person name="Le T."/>
            <person name="Mardis E."/>
            <person name="Menezes S."/>
            <person name="Miller N."/>
            <person name="Nhan M."/>
            <person name="Pauley A."/>
            <person name="Peluso D."/>
            <person name="Rifkin L."/>
            <person name="Riles L."/>
            <person name="Taich A."/>
            <person name="Trevaskis E."/>
            <person name="Vignati D."/>
            <person name="Wilcox L."/>
            <person name="Wohldman P."/>
            <person name="Vaudin M."/>
            <person name="Wilson R."/>
            <person name="Waterston R."/>
            <person name="Albermann K."/>
            <person name="Hani J."/>
            <person name="Heumann K."/>
            <person name="Kleine K."/>
            <person name="Mewes H.-W."/>
            <person name="Zollner A."/>
            <person name="Zaccaria P."/>
        </authorList>
    </citation>
    <scope>NUCLEOTIDE SEQUENCE [LARGE SCALE GENOMIC DNA]</scope>
    <source>
        <strain>ATCC 204508 / S288c</strain>
    </source>
</reference>
<reference key="2">
    <citation type="journal article" date="2014" name="G3 (Bethesda)">
        <title>The reference genome sequence of Saccharomyces cerevisiae: Then and now.</title>
        <authorList>
            <person name="Engel S.R."/>
            <person name="Dietrich F.S."/>
            <person name="Fisk D.G."/>
            <person name="Binkley G."/>
            <person name="Balakrishnan R."/>
            <person name="Costanzo M.C."/>
            <person name="Dwight S.S."/>
            <person name="Hitz B.C."/>
            <person name="Karra K."/>
            <person name="Nash R.S."/>
            <person name="Weng S."/>
            <person name="Wong E.D."/>
            <person name="Lloyd P."/>
            <person name="Skrzypek M.S."/>
            <person name="Miyasato S.R."/>
            <person name="Simison M."/>
            <person name="Cherry J.M."/>
        </authorList>
    </citation>
    <scope>GENOME REANNOTATION</scope>
    <source>
        <strain>ATCC 204508 / S288c</strain>
    </source>
</reference>
<dbReference type="EMBL" id="U33007">
    <property type="protein sequence ID" value="AAB64897.1"/>
    <property type="molecule type" value="Genomic_DNA"/>
</dbReference>
<dbReference type="PIR" id="S69740">
    <property type="entry name" value="S69740"/>
</dbReference>
<dbReference type="SMR" id="P87270"/>
<dbReference type="DIP" id="DIP-5264N"/>
<dbReference type="IntAct" id="P87270">
    <property type="interactions" value="1"/>
</dbReference>
<dbReference type="PaxDb" id="4932-YDR442W"/>
<dbReference type="EnsemblFungi" id="YDR442W_mRNA">
    <property type="protein sequence ID" value="YDR442W"/>
    <property type="gene ID" value="YDR442W"/>
</dbReference>
<dbReference type="AGR" id="SGD:S000002850"/>
<dbReference type="SGD" id="S000002850">
    <property type="gene designation" value="YDR442W"/>
</dbReference>
<dbReference type="HOGENOM" id="CLU_1939735_0_0_1"/>
<dbReference type="GO" id="GO:0016020">
    <property type="term" value="C:membrane"/>
    <property type="evidence" value="ECO:0007669"/>
    <property type="project" value="UniProtKB-SubCell"/>
</dbReference>
<protein>
    <recommendedName>
        <fullName>Putative uncharacterized protein YDR442W</fullName>
    </recommendedName>
</protein>
<evidence type="ECO:0000255" key="1"/>
<evidence type="ECO:0000305" key="2"/>
<evidence type="ECO:0000305" key="3">
    <source>
    </source>
</evidence>
<gene>
    <name type="ordered locus">YDR442W</name>
</gene>
<name>YD442_YEAST</name>